<feature type="signal peptide" evidence="2">
    <location>
        <begin position="1"/>
        <end position="24"/>
    </location>
</feature>
<feature type="chain" id="PRO_0000295075" description="Cysteine-rich receptor-like protein kinase 28">
    <location>
        <begin position="25"/>
        <end position="683"/>
    </location>
</feature>
<feature type="topological domain" description="Extracellular" evidence="2">
    <location>
        <begin position="25"/>
        <end position="288"/>
    </location>
</feature>
<feature type="transmembrane region" description="Helical" evidence="2">
    <location>
        <begin position="289"/>
        <end position="309"/>
    </location>
</feature>
<feature type="topological domain" description="Cytoplasmic" evidence="2">
    <location>
        <begin position="310"/>
        <end position="683"/>
    </location>
</feature>
<feature type="domain" description="Gnk2-homologous 1" evidence="4">
    <location>
        <begin position="32"/>
        <end position="136"/>
    </location>
</feature>
<feature type="domain" description="Gnk2-homologous 2" evidence="4">
    <location>
        <begin position="142"/>
        <end position="251"/>
    </location>
</feature>
<feature type="domain" description="Protein kinase" evidence="3">
    <location>
        <begin position="361"/>
        <end position="641"/>
    </location>
</feature>
<feature type="region of interest" description="Disordered" evidence="6">
    <location>
        <begin position="263"/>
        <end position="283"/>
    </location>
</feature>
<feature type="active site" description="Proton acceptor" evidence="3 5">
    <location>
        <position position="486"/>
    </location>
</feature>
<feature type="binding site" evidence="3">
    <location>
        <begin position="367"/>
        <end position="375"/>
    </location>
    <ligand>
        <name>ATP</name>
        <dbReference type="ChEBI" id="CHEBI:30616"/>
    </ligand>
</feature>
<feature type="binding site" evidence="3">
    <location>
        <position position="389"/>
    </location>
    <ligand>
        <name>ATP</name>
        <dbReference type="ChEBI" id="CHEBI:30616"/>
    </ligand>
</feature>
<feature type="modified residue" description="Phosphotyrosine" evidence="1">
    <location>
        <position position="434"/>
    </location>
</feature>
<feature type="modified residue" description="Phosphoserine" evidence="1">
    <location>
        <position position="490"/>
    </location>
</feature>
<feature type="modified residue" description="Phosphothreonine" evidence="1">
    <location>
        <position position="528"/>
    </location>
</feature>
<feature type="modified residue" description="Phosphotyrosine" evidence="1">
    <location>
        <position position="536"/>
    </location>
</feature>
<feature type="glycosylation site" description="N-linked (GlcNAc...) asparagine" evidence="2">
    <location>
        <position position="43"/>
    </location>
</feature>
<feature type="glycosylation site" description="N-linked (GlcNAc...) asparagine" evidence="2">
    <location>
        <position position="47"/>
    </location>
</feature>
<feature type="glycosylation site" description="N-linked (GlcNAc...) asparagine" evidence="2">
    <location>
        <position position="73"/>
    </location>
</feature>
<feature type="glycosylation site" description="N-linked (GlcNAc...) asparagine" evidence="2">
    <location>
        <position position="153"/>
    </location>
</feature>
<protein>
    <recommendedName>
        <fullName>Cysteine-rich receptor-like protein kinase 28</fullName>
        <shortName>Cysteine-rich RLK28</shortName>
        <ecNumber>2.7.11.-</ecNumber>
    </recommendedName>
</protein>
<sequence length="683" mass="75908">MEHVRVIFFFFACVLKIVPFICLAQKDKYEFPPGFNCVASGGNFTANSSFAGNLNGLVSSLSSLTSKPYGFYNLSSGDSSGERAYAIGLCRREVKRDDCLSCIQIAARNLIEQCPLTNQAVVWYTHCMFRYSNMIIYGRKETTPTLSFQAGKNISANRDEFDRLQIELLDRLKGIAAAGGPNRKYAQGSGSGVAGYPQFYGSAHCTPDLSEQDCNDCLVFGFEKIPGCCAGQVGLRWFFPSCSYRFETWRFYEFDADLEPDPPAIQPADSPTSAARTERTGKGKGGSKVIVAIVIPIVFVALFAICLCLLLKWKKNKSVGRVKGNKHNLLLLVIVILLQKDEFSDSLVVDFETLKAATDNFSPENELGRGGFGSVYKGVFSGGQEIAVKRLSCTSGQGDSEFKNEILLLAKLQHRNLVRLLGFCIEGQERILVYEFIKNASLDNFIFDLKKRQLLDWGVRYKMIGGVARGLLYLHEDSRYRIIHRDLKASNILLDQEMNPKIADFGLAKLYDTDQTSTHRFTSKIAGTYGYMAPEYAIYGQFSVKTDVFSFGVLVIEIITGKGNNNGRSNDDEEAENLLSWVWRCWREDIILSVIDPSLTTGSRSEILRCIHIGLLCVQESPASRPTMDSVALMLNSYSYTLPTPSRPAFALESVMPSMNVSSSTEPLLMSLNDVTVSELSPR</sequence>
<accession>O65405</accession>
<accession>F4JJI2</accession>
<evidence type="ECO:0000250" key="1">
    <source>
        <dbReference type="UniProtKB" id="O48814"/>
    </source>
</evidence>
<evidence type="ECO:0000255" key="2"/>
<evidence type="ECO:0000255" key="3">
    <source>
        <dbReference type="PROSITE-ProRule" id="PRU00159"/>
    </source>
</evidence>
<evidence type="ECO:0000255" key="4">
    <source>
        <dbReference type="PROSITE-ProRule" id="PRU00806"/>
    </source>
</evidence>
<evidence type="ECO:0000255" key="5">
    <source>
        <dbReference type="PROSITE-ProRule" id="PRU10027"/>
    </source>
</evidence>
<evidence type="ECO:0000256" key="6">
    <source>
        <dbReference type="SAM" id="MobiDB-lite"/>
    </source>
</evidence>
<evidence type="ECO:0000305" key="7"/>
<name>CRK28_ARATH</name>
<comment type="catalytic activity">
    <reaction>
        <text>L-seryl-[protein] + ATP = O-phospho-L-seryl-[protein] + ADP + H(+)</text>
        <dbReference type="Rhea" id="RHEA:17989"/>
        <dbReference type="Rhea" id="RHEA-COMP:9863"/>
        <dbReference type="Rhea" id="RHEA-COMP:11604"/>
        <dbReference type="ChEBI" id="CHEBI:15378"/>
        <dbReference type="ChEBI" id="CHEBI:29999"/>
        <dbReference type="ChEBI" id="CHEBI:30616"/>
        <dbReference type="ChEBI" id="CHEBI:83421"/>
        <dbReference type="ChEBI" id="CHEBI:456216"/>
    </reaction>
</comment>
<comment type="catalytic activity">
    <reaction>
        <text>L-threonyl-[protein] + ATP = O-phospho-L-threonyl-[protein] + ADP + H(+)</text>
        <dbReference type="Rhea" id="RHEA:46608"/>
        <dbReference type="Rhea" id="RHEA-COMP:11060"/>
        <dbReference type="Rhea" id="RHEA-COMP:11605"/>
        <dbReference type="ChEBI" id="CHEBI:15378"/>
        <dbReference type="ChEBI" id="CHEBI:30013"/>
        <dbReference type="ChEBI" id="CHEBI:30616"/>
        <dbReference type="ChEBI" id="CHEBI:61977"/>
        <dbReference type="ChEBI" id="CHEBI:456216"/>
    </reaction>
</comment>
<comment type="subcellular location">
    <subcellularLocation>
        <location evidence="7">Membrane</location>
        <topology evidence="7">Single-pass membrane protein</topology>
    </subcellularLocation>
</comment>
<comment type="similarity">
    <text evidence="3">Belongs to the protein kinase superfamily. Ser/Thr protein kinase family. CRK subfamily.</text>
</comment>
<comment type="sequence caution" evidence="7">
    <conflict type="erroneous gene model prediction">
        <sequence resource="EMBL-CDS" id="CAA18704"/>
    </conflict>
</comment>
<comment type="sequence caution" evidence="7">
    <conflict type="erroneous gene model prediction">
        <sequence resource="EMBL-CDS" id="CAA20205"/>
    </conflict>
</comment>
<comment type="sequence caution" evidence="7">
    <conflict type="erroneous gene model prediction">
        <sequence resource="EMBL-CDS" id="CAB81247"/>
    </conflict>
</comment>
<reference key="1">
    <citation type="journal article" date="1999" name="Nature">
        <title>Sequence and analysis of chromosome 4 of the plant Arabidopsis thaliana.</title>
        <authorList>
            <person name="Mayer K.F.X."/>
            <person name="Schueller C."/>
            <person name="Wambutt R."/>
            <person name="Murphy G."/>
            <person name="Volckaert G."/>
            <person name="Pohl T."/>
            <person name="Duesterhoeft A."/>
            <person name="Stiekema W."/>
            <person name="Entian K.-D."/>
            <person name="Terryn N."/>
            <person name="Harris B."/>
            <person name="Ansorge W."/>
            <person name="Brandt P."/>
            <person name="Grivell L.A."/>
            <person name="Rieger M."/>
            <person name="Weichselgartner M."/>
            <person name="de Simone V."/>
            <person name="Obermaier B."/>
            <person name="Mache R."/>
            <person name="Mueller M."/>
            <person name="Kreis M."/>
            <person name="Delseny M."/>
            <person name="Puigdomenech P."/>
            <person name="Watson M."/>
            <person name="Schmidtheini T."/>
            <person name="Reichert B."/>
            <person name="Portetelle D."/>
            <person name="Perez-Alonso M."/>
            <person name="Boutry M."/>
            <person name="Bancroft I."/>
            <person name="Vos P."/>
            <person name="Hoheisel J."/>
            <person name="Zimmermann W."/>
            <person name="Wedler H."/>
            <person name="Ridley P."/>
            <person name="Langham S.-A."/>
            <person name="McCullagh B."/>
            <person name="Bilham L."/>
            <person name="Robben J."/>
            <person name="van der Schueren J."/>
            <person name="Grymonprez B."/>
            <person name="Chuang Y.-J."/>
            <person name="Vandenbussche F."/>
            <person name="Braeken M."/>
            <person name="Weltjens I."/>
            <person name="Voet M."/>
            <person name="Bastiaens I."/>
            <person name="Aert R."/>
            <person name="Defoor E."/>
            <person name="Weitzenegger T."/>
            <person name="Bothe G."/>
            <person name="Ramsperger U."/>
            <person name="Hilbert H."/>
            <person name="Braun M."/>
            <person name="Holzer E."/>
            <person name="Brandt A."/>
            <person name="Peters S."/>
            <person name="van Staveren M."/>
            <person name="Dirkse W."/>
            <person name="Mooijman P."/>
            <person name="Klein Lankhorst R."/>
            <person name="Rose M."/>
            <person name="Hauf J."/>
            <person name="Koetter P."/>
            <person name="Berneiser S."/>
            <person name="Hempel S."/>
            <person name="Feldpausch M."/>
            <person name="Lamberth S."/>
            <person name="Van den Daele H."/>
            <person name="De Keyser A."/>
            <person name="Buysshaert C."/>
            <person name="Gielen J."/>
            <person name="Villarroel R."/>
            <person name="De Clercq R."/>
            <person name="van Montagu M."/>
            <person name="Rogers J."/>
            <person name="Cronin A."/>
            <person name="Quail M.A."/>
            <person name="Bray-Allen S."/>
            <person name="Clark L."/>
            <person name="Doggett J."/>
            <person name="Hall S."/>
            <person name="Kay M."/>
            <person name="Lennard N."/>
            <person name="McLay K."/>
            <person name="Mayes R."/>
            <person name="Pettett A."/>
            <person name="Rajandream M.A."/>
            <person name="Lyne M."/>
            <person name="Benes V."/>
            <person name="Rechmann S."/>
            <person name="Borkova D."/>
            <person name="Bloecker H."/>
            <person name="Scharfe M."/>
            <person name="Grimm M."/>
            <person name="Loehnert T.-H."/>
            <person name="Dose S."/>
            <person name="de Haan M."/>
            <person name="Maarse A.C."/>
            <person name="Schaefer M."/>
            <person name="Mueller-Auer S."/>
            <person name="Gabel C."/>
            <person name="Fuchs M."/>
            <person name="Fartmann B."/>
            <person name="Granderath K."/>
            <person name="Dauner D."/>
            <person name="Herzl A."/>
            <person name="Neumann S."/>
            <person name="Argiriou A."/>
            <person name="Vitale D."/>
            <person name="Liguori R."/>
            <person name="Piravandi E."/>
            <person name="Massenet O."/>
            <person name="Quigley F."/>
            <person name="Clabauld G."/>
            <person name="Muendlein A."/>
            <person name="Felber R."/>
            <person name="Schnabl S."/>
            <person name="Hiller R."/>
            <person name="Schmidt W."/>
            <person name="Lecharny A."/>
            <person name="Aubourg S."/>
            <person name="Chefdor F."/>
            <person name="Cooke R."/>
            <person name="Berger C."/>
            <person name="Monfort A."/>
            <person name="Casacuberta E."/>
            <person name="Gibbons T."/>
            <person name="Weber N."/>
            <person name="Vandenbol M."/>
            <person name="Bargues M."/>
            <person name="Terol J."/>
            <person name="Torres A."/>
            <person name="Perez-Perez A."/>
            <person name="Purnelle B."/>
            <person name="Bent E."/>
            <person name="Johnson S."/>
            <person name="Tacon D."/>
            <person name="Jesse T."/>
            <person name="Heijnen L."/>
            <person name="Schwarz S."/>
            <person name="Scholler P."/>
            <person name="Heber S."/>
            <person name="Francs P."/>
            <person name="Bielke C."/>
            <person name="Frishman D."/>
            <person name="Haase D."/>
            <person name="Lemcke K."/>
            <person name="Mewes H.-W."/>
            <person name="Stocker S."/>
            <person name="Zaccaria P."/>
            <person name="Bevan M."/>
            <person name="Wilson R.K."/>
            <person name="de la Bastide M."/>
            <person name="Habermann K."/>
            <person name="Parnell L."/>
            <person name="Dedhia N."/>
            <person name="Gnoj L."/>
            <person name="Schutz K."/>
            <person name="Huang E."/>
            <person name="Spiegel L."/>
            <person name="Sekhon M."/>
            <person name="Murray J."/>
            <person name="Sheet P."/>
            <person name="Cordes M."/>
            <person name="Abu-Threideh J."/>
            <person name="Stoneking T."/>
            <person name="Kalicki J."/>
            <person name="Graves T."/>
            <person name="Harmon G."/>
            <person name="Edwards J."/>
            <person name="Latreille P."/>
            <person name="Courtney L."/>
            <person name="Cloud J."/>
            <person name="Abbott A."/>
            <person name="Scott K."/>
            <person name="Johnson D."/>
            <person name="Minx P."/>
            <person name="Bentley D."/>
            <person name="Fulton B."/>
            <person name="Miller N."/>
            <person name="Greco T."/>
            <person name="Kemp K."/>
            <person name="Kramer J."/>
            <person name="Fulton L."/>
            <person name="Mardis E."/>
            <person name="Dante M."/>
            <person name="Pepin K."/>
            <person name="Hillier L.W."/>
            <person name="Nelson J."/>
            <person name="Spieth J."/>
            <person name="Ryan E."/>
            <person name="Andrews S."/>
            <person name="Geisel C."/>
            <person name="Layman D."/>
            <person name="Du H."/>
            <person name="Ali J."/>
            <person name="Berghoff A."/>
            <person name="Jones K."/>
            <person name="Drone K."/>
            <person name="Cotton M."/>
            <person name="Joshu C."/>
            <person name="Antonoiu B."/>
            <person name="Zidanic M."/>
            <person name="Strong C."/>
            <person name="Sun H."/>
            <person name="Lamar B."/>
            <person name="Yordan C."/>
            <person name="Ma P."/>
            <person name="Zhong J."/>
            <person name="Preston R."/>
            <person name="Vil D."/>
            <person name="Shekher M."/>
            <person name="Matero A."/>
            <person name="Shah R."/>
            <person name="Swaby I.K."/>
            <person name="O'Shaughnessy A."/>
            <person name="Rodriguez M."/>
            <person name="Hoffman J."/>
            <person name="Till S."/>
            <person name="Granat S."/>
            <person name="Shohdy N."/>
            <person name="Hasegawa A."/>
            <person name="Hameed A."/>
            <person name="Lodhi M."/>
            <person name="Johnson A."/>
            <person name="Chen E."/>
            <person name="Marra M.A."/>
            <person name="Martienssen R."/>
            <person name="McCombie W.R."/>
        </authorList>
    </citation>
    <scope>NUCLEOTIDE SEQUENCE [LARGE SCALE GENOMIC DNA]</scope>
    <source>
        <strain>cv. Columbia</strain>
    </source>
</reference>
<reference key="2">
    <citation type="journal article" date="2017" name="Plant J.">
        <title>Araport11: a complete reannotation of the Arabidopsis thaliana reference genome.</title>
        <authorList>
            <person name="Cheng C.Y."/>
            <person name="Krishnakumar V."/>
            <person name="Chan A.P."/>
            <person name="Thibaud-Nissen F."/>
            <person name="Schobel S."/>
            <person name="Town C.D."/>
        </authorList>
    </citation>
    <scope>GENOME REANNOTATION</scope>
    <source>
        <strain>cv. Columbia</strain>
    </source>
</reference>
<reference key="3">
    <citation type="journal article" date="2001" name="Plant Physiol.">
        <title>A superfamily of proteins with novel cysteine-rich repeats.</title>
        <authorList>
            <person name="Chen Z."/>
        </authorList>
    </citation>
    <scope>GENE FAMILY ORGANIZATION</scope>
    <scope>NOMENCLATURE</scope>
</reference>
<keyword id="KW-0067">ATP-binding</keyword>
<keyword id="KW-0325">Glycoprotein</keyword>
<keyword id="KW-0418">Kinase</keyword>
<keyword id="KW-0472">Membrane</keyword>
<keyword id="KW-0547">Nucleotide-binding</keyword>
<keyword id="KW-0597">Phosphoprotein</keyword>
<keyword id="KW-0675">Receptor</keyword>
<keyword id="KW-1185">Reference proteome</keyword>
<keyword id="KW-0677">Repeat</keyword>
<keyword id="KW-0723">Serine/threonine-protein kinase</keyword>
<keyword id="KW-0732">Signal</keyword>
<keyword id="KW-0808">Transferase</keyword>
<keyword id="KW-0812">Transmembrane</keyword>
<keyword id="KW-1133">Transmembrane helix</keyword>
<dbReference type="EC" id="2.7.11.-"/>
<dbReference type="EMBL" id="AL022603">
    <property type="protein sequence ID" value="CAA18704.1"/>
    <property type="status" value="ALT_SEQ"/>
    <property type="molecule type" value="Genomic_DNA"/>
</dbReference>
<dbReference type="EMBL" id="AL031187">
    <property type="protein sequence ID" value="CAA20205.1"/>
    <property type="status" value="ALT_SEQ"/>
    <property type="molecule type" value="Genomic_DNA"/>
</dbReference>
<dbReference type="EMBL" id="AL161555">
    <property type="protein sequence ID" value="CAB81247.1"/>
    <property type="status" value="ALT_SEQ"/>
    <property type="molecule type" value="Genomic_DNA"/>
</dbReference>
<dbReference type="EMBL" id="CP002687">
    <property type="protein sequence ID" value="AEE84448.2"/>
    <property type="molecule type" value="Genomic_DNA"/>
</dbReference>
<dbReference type="PIR" id="T05148">
    <property type="entry name" value="T05148"/>
</dbReference>
<dbReference type="RefSeq" id="NP_001320019.1">
    <property type="nucleotide sequence ID" value="NM_001341480.1"/>
</dbReference>
<dbReference type="SMR" id="O65405"/>
<dbReference type="BioGRID" id="13183">
    <property type="interactions" value="2"/>
</dbReference>
<dbReference type="FunCoup" id="O65405">
    <property type="interactions" value="64"/>
</dbReference>
<dbReference type="STRING" id="3702.O65405"/>
<dbReference type="GlyCosmos" id="O65405">
    <property type="glycosylation" value="4 sites, No reported glycans"/>
</dbReference>
<dbReference type="GlyGen" id="O65405">
    <property type="glycosylation" value="5 sites"/>
</dbReference>
<dbReference type="iPTMnet" id="O65405"/>
<dbReference type="PaxDb" id="3702-AT4G21400.1"/>
<dbReference type="ProteomicsDB" id="220339"/>
<dbReference type="EnsemblPlants" id="AT4G21400.1">
    <property type="protein sequence ID" value="AT4G21400.1"/>
    <property type="gene ID" value="AT4G21400"/>
</dbReference>
<dbReference type="GeneID" id="827892"/>
<dbReference type="Gramene" id="AT4G21400.1">
    <property type="protein sequence ID" value="AT4G21400.1"/>
    <property type="gene ID" value="AT4G21400"/>
</dbReference>
<dbReference type="KEGG" id="ath:AT4G21400"/>
<dbReference type="Araport" id="AT4G21400"/>
<dbReference type="TAIR" id="AT4G21400">
    <property type="gene designation" value="CRK28"/>
</dbReference>
<dbReference type="eggNOG" id="ENOG502QWDY">
    <property type="taxonomic scope" value="Eukaryota"/>
</dbReference>
<dbReference type="InParanoid" id="O65405"/>
<dbReference type="PhylomeDB" id="O65405"/>
<dbReference type="PRO" id="PR:O65405"/>
<dbReference type="Proteomes" id="UP000006548">
    <property type="component" value="Chromosome 4"/>
</dbReference>
<dbReference type="ExpressionAtlas" id="O65405">
    <property type="expression patterns" value="baseline and differential"/>
</dbReference>
<dbReference type="GO" id="GO:0016020">
    <property type="term" value="C:membrane"/>
    <property type="evidence" value="ECO:0007669"/>
    <property type="project" value="UniProtKB-SubCell"/>
</dbReference>
<dbReference type="GO" id="GO:0005524">
    <property type="term" value="F:ATP binding"/>
    <property type="evidence" value="ECO:0007669"/>
    <property type="project" value="UniProtKB-KW"/>
</dbReference>
<dbReference type="GO" id="GO:0106310">
    <property type="term" value="F:protein serine kinase activity"/>
    <property type="evidence" value="ECO:0007669"/>
    <property type="project" value="RHEA"/>
</dbReference>
<dbReference type="GO" id="GO:0004674">
    <property type="term" value="F:protein serine/threonine kinase activity"/>
    <property type="evidence" value="ECO:0007669"/>
    <property type="project" value="UniProtKB-KW"/>
</dbReference>
<dbReference type="CDD" id="cd23509">
    <property type="entry name" value="Gnk2-like"/>
    <property type="match status" value="2"/>
</dbReference>
<dbReference type="CDD" id="cd14066">
    <property type="entry name" value="STKc_IRAK"/>
    <property type="match status" value="1"/>
</dbReference>
<dbReference type="FunFam" id="3.30.200.20:FF:000142">
    <property type="entry name" value="Cysteine-rich receptor-like protein kinase 10"/>
    <property type="match status" value="1"/>
</dbReference>
<dbReference type="FunFam" id="3.30.430.20:FF:000002">
    <property type="entry name" value="Cysteine-rich receptor-like protein kinase 10"/>
    <property type="match status" value="1"/>
</dbReference>
<dbReference type="FunFam" id="1.10.510.10:FF:000343">
    <property type="entry name" value="Cysteine-rich receptor-like protein kinase 28"/>
    <property type="match status" value="1"/>
</dbReference>
<dbReference type="FunFam" id="3.30.430.20:FF:000009">
    <property type="entry name" value="Cysteine-rich receptor-like protein kinase 28"/>
    <property type="match status" value="1"/>
</dbReference>
<dbReference type="Gene3D" id="3.30.430.20">
    <property type="entry name" value="Gnk2 domain, C-X8-C-X2-C motif"/>
    <property type="match status" value="2"/>
</dbReference>
<dbReference type="Gene3D" id="3.30.200.20">
    <property type="entry name" value="Phosphorylase Kinase, domain 1"/>
    <property type="match status" value="1"/>
</dbReference>
<dbReference type="Gene3D" id="1.10.510.10">
    <property type="entry name" value="Transferase(Phosphotransferase) domain 1"/>
    <property type="match status" value="1"/>
</dbReference>
<dbReference type="InterPro" id="IPR002902">
    <property type="entry name" value="GNK2"/>
</dbReference>
<dbReference type="InterPro" id="IPR038408">
    <property type="entry name" value="GNK2_sf"/>
</dbReference>
<dbReference type="InterPro" id="IPR011009">
    <property type="entry name" value="Kinase-like_dom_sf"/>
</dbReference>
<dbReference type="InterPro" id="IPR000719">
    <property type="entry name" value="Prot_kinase_dom"/>
</dbReference>
<dbReference type="InterPro" id="IPR017441">
    <property type="entry name" value="Protein_kinase_ATP_BS"/>
</dbReference>
<dbReference type="InterPro" id="IPR001245">
    <property type="entry name" value="Ser-Thr/Tyr_kinase_cat_dom"/>
</dbReference>
<dbReference type="InterPro" id="IPR008271">
    <property type="entry name" value="Ser/Thr_kinase_AS"/>
</dbReference>
<dbReference type="PANTHER" id="PTHR27002:SF1091">
    <property type="entry name" value="CYSTEINE-RICH RECEPTOR-LIKE PROTEIN KINASE 28-RELATED"/>
    <property type="match status" value="1"/>
</dbReference>
<dbReference type="PANTHER" id="PTHR27002">
    <property type="entry name" value="RECEPTOR-LIKE SERINE/THREONINE-PROTEIN KINASE SD1-8"/>
    <property type="match status" value="1"/>
</dbReference>
<dbReference type="Pfam" id="PF07714">
    <property type="entry name" value="PK_Tyr_Ser-Thr"/>
    <property type="match status" value="1"/>
</dbReference>
<dbReference type="Pfam" id="PF01657">
    <property type="entry name" value="Stress-antifung"/>
    <property type="match status" value="2"/>
</dbReference>
<dbReference type="SMART" id="SM00220">
    <property type="entry name" value="S_TKc"/>
    <property type="match status" value="1"/>
</dbReference>
<dbReference type="SUPFAM" id="SSF56112">
    <property type="entry name" value="Protein kinase-like (PK-like)"/>
    <property type="match status" value="1"/>
</dbReference>
<dbReference type="PROSITE" id="PS51473">
    <property type="entry name" value="GNK2"/>
    <property type="match status" value="2"/>
</dbReference>
<dbReference type="PROSITE" id="PS00107">
    <property type="entry name" value="PROTEIN_KINASE_ATP"/>
    <property type="match status" value="1"/>
</dbReference>
<dbReference type="PROSITE" id="PS50011">
    <property type="entry name" value="PROTEIN_KINASE_DOM"/>
    <property type="match status" value="1"/>
</dbReference>
<dbReference type="PROSITE" id="PS00108">
    <property type="entry name" value="PROTEIN_KINASE_ST"/>
    <property type="match status" value="1"/>
</dbReference>
<organism>
    <name type="scientific">Arabidopsis thaliana</name>
    <name type="common">Mouse-ear cress</name>
    <dbReference type="NCBI Taxonomy" id="3702"/>
    <lineage>
        <taxon>Eukaryota</taxon>
        <taxon>Viridiplantae</taxon>
        <taxon>Streptophyta</taxon>
        <taxon>Embryophyta</taxon>
        <taxon>Tracheophyta</taxon>
        <taxon>Spermatophyta</taxon>
        <taxon>Magnoliopsida</taxon>
        <taxon>eudicotyledons</taxon>
        <taxon>Gunneridae</taxon>
        <taxon>Pentapetalae</taxon>
        <taxon>rosids</taxon>
        <taxon>malvids</taxon>
        <taxon>Brassicales</taxon>
        <taxon>Brassicaceae</taxon>
        <taxon>Camelineae</taxon>
        <taxon>Arabidopsis</taxon>
    </lineage>
</organism>
<gene>
    <name type="primary">CRK28</name>
    <name type="ordered locus">At4g21400</name>
    <name type="ORF">F18E5.20</name>
    <name type="ORF">T6K22.130</name>
</gene>
<proteinExistence type="inferred from homology"/>